<reference key="1">
    <citation type="journal article" date="2000" name="Nature">
        <title>DNA sequence of both chromosomes of the cholera pathogen Vibrio cholerae.</title>
        <authorList>
            <person name="Heidelberg J.F."/>
            <person name="Eisen J.A."/>
            <person name="Nelson W.C."/>
            <person name="Clayton R.A."/>
            <person name="Gwinn M.L."/>
            <person name="Dodson R.J."/>
            <person name="Haft D.H."/>
            <person name="Hickey E.K."/>
            <person name="Peterson J.D."/>
            <person name="Umayam L.A."/>
            <person name="Gill S.R."/>
            <person name="Nelson K.E."/>
            <person name="Read T.D."/>
            <person name="Tettelin H."/>
            <person name="Richardson D.L."/>
            <person name="Ermolaeva M.D."/>
            <person name="Vamathevan J.J."/>
            <person name="Bass S."/>
            <person name="Qin H."/>
            <person name="Dragoi I."/>
            <person name="Sellers P."/>
            <person name="McDonald L.A."/>
            <person name="Utterback T.R."/>
            <person name="Fleischmann R.D."/>
            <person name="Nierman W.C."/>
            <person name="White O."/>
            <person name="Salzberg S.L."/>
            <person name="Smith H.O."/>
            <person name="Colwell R.R."/>
            <person name="Mekalanos J.J."/>
            <person name="Venter J.C."/>
            <person name="Fraser C.M."/>
        </authorList>
    </citation>
    <scope>NUCLEOTIDE SEQUENCE [LARGE SCALE GENOMIC DNA]</scope>
    <source>
        <strain>ATCC 39315 / El Tor Inaba N16961</strain>
    </source>
</reference>
<proteinExistence type="inferred from homology"/>
<feature type="chain" id="PRO_0000051603" description="Carbohydrate deacetylase">
    <location>
        <begin position="1"/>
        <end position="252"/>
    </location>
</feature>
<feature type="binding site" evidence="1">
    <location>
        <position position="59"/>
    </location>
    <ligand>
        <name>Mg(2+)</name>
        <dbReference type="ChEBI" id="CHEBI:18420"/>
    </ligand>
</feature>
<feature type="binding site" evidence="1">
    <location>
        <position position="122"/>
    </location>
    <ligand>
        <name>Mg(2+)</name>
        <dbReference type="ChEBI" id="CHEBI:18420"/>
    </ligand>
</feature>
<organism>
    <name type="scientific">Vibrio cholerae serotype O1 (strain ATCC 39315 / El Tor Inaba N16961)</name>
    <dbReference type="NCBI Taxonomy" id="243277"/>
    <lineage>
        <taxon>Bacteria</taxon>
        <taxon>Pseudomonadati</taxon>
        <taxon>Pseudomonadota</taxon>
        <taxon>Gammaproteobacteria</taxon>
        <taxon>Vibrionales</taxon>
        <taxon>Vibrionaceae</taxon>
        <taxon>Vibrio</taxon>
    </lineage>
</organism>
<comment type="function">
    <text evidence="1">Probably catalyzes the deacetylation of acetylated carbohydrates an important step in the degradation of oligosaccharides.</text>
</comment>
<comment type="cofactor">
    <cofactor evidence="1">
        <name>Mg(2+)</name>
        <dbReference type="ChEBI" id="CHEBI:18420"/>
    </cofactor>
</comment>
<comment type="subunit">
    <text evidence="1">Homodimer.</text>
</comment>
<comment type="similarity">
    <text evidence="1">Belongs to the YdjC deacetylase family.</text>
</comment>
<protein>
    <recommendedName>
        <fullName evidence="1">Carbohydrate deacetylase</fullName>
        <ecNumber evidence="1">3.5.1.-</ecNumber>
    </recommendedName>
</protein>
<gene>
    <name type="ordered locus">VC_1285</name>
</gene>
<sequence>MKVIFNADDFGLTQGVNQGIVKAHLDGVVKSTTLMVGMPAEQHAVQLAKQLPDLKIGLHLRFTAGRPLTGERNLTDEHGVFTAYRDFWQRRDYQPEAIYHEAIAQVEHFLKLGLTLSHLDSHHHAHTHPQLAPIIYEVAKKYHVPLRDIGMAGEEAFGCRYHFTDFFYDQRLGIDPLMKHLLELKERFDLVEVMCHPAFVDPLLEKCSGYAKQREEELHILTSAQLIQLLVAHDIEITDYSALISAPLHSCV</sequence>
<evidence type="ECO:0000255" key="1">
    <source>
        <dbReference type="HAMAP-Rule" id="MF_01246"/>
    </source>
</evidence>
<accession>Q9KSH1</accession>
<name>YDJC_VIBCH</name>
<keyword id="KW-0119">Carbohydrate metabolism</keyword>
<keyword id="KW-0378">Hydrolase</keyword>
<keyword id="KW-0460">Magnesium</keyword>
<keyword id="KW-0479">Metal-binding</keyword>
<keyword id="KW-1185">Reference proteome</keyword>
<dbReference type="EC" id="3.5.1.-" evidence="1"/>
<dbReference type="EMBL" id="AE003852">
    <property type="protein sequence ID" value="AAF94444.1"/>
    <property type="molecule type" value="Genomic_DNA"/>
</dbReference>
<dbReference type="PIR" id="H82219">
    <property type="entry name" value="H82219"/>
</dbReference>
<dbReference type="RefSeq" id="NP_230930.1">
    <property type="nucleotide sequence ID" value="NC_002505.1"/>
</dbReference>
<dbReference type="SMR" id="Q9KSH1"/>
<dbReference type="STRING" id="243277.VC_1285"/>
<dbReference type="DNASU" id="2614739"/>
<dbReference type="EnsemblBacteria" id="AAF94444">
    <property type="protein sequence ID" value="AAF94444"/>
    <property type="gene ID" value="VC_1285"/>
</dbReference>
<dbReference type="KEGG" id="vch:VC_1285"/>
<dbReference type="PATRIC" id="fig|243277.26.peg.1224"/>
<dbReference type="eggNOG" id="COG3394">
    <property type="taxonomic scope" value="Bacteria"/>
</dbReference>
<dbReference type="HOGENOM" id="CLU_064244_4_0_6"/>
<dbReference type="Proteomes" id="UP000000584">
    <property type="component" value="Chromosome 1"/>
</dbReference>
<dbReference type="GO" id="GO:0019213">
    <property type="term" value="F:deacetylase activity"/>
    <property type="evidence" value="ECO:0000318"/>
    <property type="project" value="GO_Central"/>
</dbReference>
<dbReference type="GO" id="GO:0016811">
    <property type="term" value="F:hydrolase activity, acting on carbon-nitrogen (but not peptide) bonds, in linear amides"/>
    <property type="evidence" value="ECO:0007669"/>
    <property type="project" value="UniProtKB-UniRule"/>
</dbReference>
<dbReference type="GO" id="GO:0046872">
    <property type="term" value="F:metal ion binding"/>
    <property type="evidence" value="ECO:0007669"/>
    <property type="project" value="UniProtKB-KW"/>
</dbReference>
<dbReference type="GO" id="GO:0000272">
    <property type="term" value="P:polysaccharide catabolic process"/>
    <property type="evidence" value="ECO:0007669"/>
    <property type="project" value="InterPro"/>
</dbReference>
<dbReference type="CDD" id="cd10803">
    <property type="entry name" value="YdjC_EF3048_like"/>
    <property type="match status" value="1"/>
</dbReference>
<dbReference type="FunFam" id="3.20.20.370:FF:000015">
    <property type="entry name" value="Carbohydrate deacetylase"/>
    <property type="match status" value="1"/>
</dbReference>
<dbReference type="Gene3D" id="3.20.20.370">
    <property type="entry name" value="Glycoside hydrolase/deacetylase"/>
    <property type="match status" value="1"/>
</dbReference>
<dbReference type="HAMAP" id="MF_01246">
    <property type="entry name" value="COD"/>
    <property type="match status" value="1"/>
</dbReference>
<dbReference type="InterPro" id="IPR022948">
    <property type="entry name" value="COD_ChbG_bac"/>
</dbReference>
<dbReference type="InterPro" id="IPR011330">
    <property type="entry name" value="Glyco_hydro/deAcase_b/a-brl"/>
</dbReference>
<dbReference type="InterPro" id="IPR006879">
    <property type="entry name" value="YdjC-like"/>
</dbReference>
<dbReference type="NCBIfam" id="NF002559">
    <property type="entry name" value="PRK02134.1"/>
    <property type="match status" value="1"/>
</dbReference>
<dbReference type="PANTHER" id="PTHR31609:SF1">
    <property type="entry name" value="CARBOHYDRATE DEACETYLASE"/>
    <property type="match status" value="1"/>
</dbReference>
<dbReference type="PANTHER" id="PTHR31609">
    <property type="entry name" value="YDJC DEACETYLASE FAMILY MEMBER"/>
    <property type="match status" value="1"/>
</dbReference>
<dbReference type="Pfam" id="PF04794">
    <property type="entry name" value="YdjC"/>
    <property type="match status" value="1"/>
</dbReference>
<dbReference type="SUPFAM" id="SSF88713">
    <property type="entry name" value="Glycoside hydrolase/deacetylase"/>
    <property type="match status" value="1"/>
</dbReference>